<protein>
    <recommendedName>
        <fullName evidence="1">Probable GTP-binding protein EngB</fullName>
    </recommendedName>
</protein>
<accession>Q6GG32</accession>
<dbReference type="EMBL" id="BX571856">
    <property type="protein sequence ID" value="CAG40744.1"/>
    <property type="molecule type" value="Genomic_DNA"/>
</dbReference>
<dbReference type="SMR" id="Q6GG32"/>
<dbReference type="KEGG" id="sar:SAR1753"/>
<dbReference type="HOGENOM" id="CLU_033732_3_0_9"/>
<dbReference type="Proteomes" id="UP000000596">
    <property type="component" value="Chromosome"/>
</dbReference>
<dbReference type="GO" id="GO:0005829">
    <property type="term" value="C:cytosol"/>
    <property type="evidence" value="ECO:0007669"/>
    <property type="project" value="TreeGrafter"/>
</dbReference>
<dbReference type="GO" id="GO:0005525">
    <property type="term" value="F:GTP binding"/>
    <property type="evidence" value="ECO:0007669"/>
    <property type="project" value="UniProtKB-UniRule"/>
</dbReference>
<dbReference type="GO" id="GO:0046872">
    <property type="term" value="F:metal ion binding"/>
    <property type="evidence" value="ECO:0007669"/>
    <property type="project" value="UniProtKB-KW"/>
</dbReference>
<dbReference type="GO" id="GO:0000917">
    <property type="term" value="P:division septum assembly"/>
    <property type="evidence" value="ECO:0007669"/>
    <property type="project" value="UniProtKB-KW"/>
</dbReference>
<dbReference type="CDD" id="cd01876">
    <property type="entry name" value="YihA_EngB"/>
    <property type="match status" value="1"/>
</dbReference>
<dbReference type="FunFam" id="3.40.50.300:FF:000098">
    <property type="entry name" value="Probable GTP-binding protein EngB"/>
    <property type="match status" value="1"/>
</dbReference>
<dbReference type="Gene3D" id="3.40.50.300">
    <property type="entry name" value="P-loop containing nucleotide triphosphate hydrolases"/>
    <property type="match status" value="1"/>
</dbReference>
<dbReference type="HAMAP" id="MF_00321">
    <property type="entry name" value="GTPase_EngB"/>
    <property type="match status" value="1"/>
</dbReference>
<dbReference type="InterPro" id="IPR030393">
    <property type="entry name" value="G_ENGB_dom"/>
</dbReference>
<dbReference type="InterPro" id="IPR006073">
    <property type="entry name" value="GTP-bd"/>
</dbReference>
<dbReference type="InterPro" id="IPR019987">
    <property type="entry name" value="GTP-bd_ribosome_bio_YsxC"/>
</dbReference>
<dbReference type="InterPro" id="IPR027417">
    <property type="entry name" value="P-loop_NTPase"/>
</dbReference>
<dbReference type="NCBIfam" id="TIGR03598">
    <property type="entry name" value="GTPase_YsxC"/>
    <property type="match status" value="1"/>
</dbReference>
<dbReference type="PANTHER" id="PTHR11649:SF13">
    <property type="entry name" value="ENGB-TYPE G DOMAIN-CONTAINING PROTEIN"/>
    <property type="match status" value="1"/>
</dbReference>
<dbReference type="PANTHER" id="PTHR11649">
    <property type="entry name" value="MSS1/TRME-RELATED GTP-BINDING PROTEIN"/>
    <property type="match status" value="1"/>
</dbReference>
<dbReference type="Pfam" id="PF01926">
    <property type="entry name" value="MMR_HSR1"/>
    <property type="match status" value="1"/>
</dbReference>
<dbReference type="SUPFAM" id="SSF52540">
    <property type="entry name" value="P-loop containing nucleoside triphosphate hydrolases"/>
    <property type="match status" value="1"/>
</dbReference>
<dbReference type="PROSITE" id="PS51706">
    <property type="entry name" value="G_ENGB"/>
    <property type="match status" value="1"/>
</dbReference>
<reference key="1">
    <citation type="journal article" date="2004" name="Proc. Natl. Acad. Sci. U.S.A.">
        <title>Complete genomes of two clinical Staphylococcus aureus strains: evidence for the rapid evolution of virulence and drug resistance.</title>
        <authorList>
            <person name="Holden M.T.G."/>
            <person name="Feil E.J."/>
            <person name="Lindsay J.A."/>
            <person name="Peacock S.J."/>
            <person name="Day N.P.J."/>
            <person name="Enright M.C."/>
            <person name="Foster T.J."/>
            <person name="Moore C.E."/>
            <person name="Hurst L."/>
            <person name="Atkin R."/>
            <person name="Barron A."/>
            <person name="Bason N."/>
            <person name="Bentley S.D."/>
            <person name="Chillingworth C."/>
            <person name="Chillingworth T."/>
            <person name="Churcher C."/>
            <person name="Clark L."/>
            <person name="Corton C."/>
            <person name="Cronin A."/>
            <person name="Doggett J."/>
            <person name="Dowd L."/>
            <person name="Feltwell T."/>
            <person name="Hance Z."/>
            <person name="Harris B."/>
            <person name="Hauser H."/>
            <person name="Holroyd S."/>
            <person name="Jagels K."/>
            <person name="James K.D."/>
            <person name="Lennard N."/>
            <person name="Line A."/>
            <person name="Mayes R."/>
            <person name="Moule S."/>
            <person name="Mungall K."/>
            <person name="Ormond D."/>
            <person name="Quail M.A."/>
            <person name="Rabbinowitsch E."/>
            <person name="Rutherford K.M."/>
            <person name="Sanders M."/>
            <person name="Sharp S."/>
            <person name="Simmonds M."/>
            <person name="Stevens K."/>
            <person name="Whitehead S."/>
            <person name="Barrell B.G."/>
            <person name="Spratt B.G."/>
            <person name="Parkhill J."/>
        </authorList>
    </citation>
    <scope>NUCLEOTIDE SEQUENCE [LARGE SCALE GENOMIC DNA]</scope>
    <source>
        <strain>MRSA252</strain>
    </source>
</reference>
<gene>
    <name evidence="1" type="primary">engB</name>
    <name type="ordered locus">SAR1753</name>
</gene>
<proteinExistence type="inferred from homology"/>
<feature type="chain" id="PRO_0000157783" description="Probable GTP-binding protein EngB">
    <location>
        <begin position="1"/>
        <end position="196"/>
    </location>
</feature>
<feature type="domain" description="EngB-type G" evidence="1">
    <location>
        <begin position="24"/>
        <end position="196"/>
    </location>
</feature>
<feature type="binding site" evidence="1">
    <location>
        <begin position="32"/>
        <end position="39"/>
    </location>
    <ligand>
        <name>GTP</name>
        <dbReference type="ChEBI" id="CHEBI:37565"/>
    </ligand>
</feature>
<feature type="binding site" evidence="1">
    <location>
        <position position="39"/>
    </location>
    <ligand>
        <name>Mg(2+)</name>
        <dbReference type="ChEBI" id="CHEBI:18420"/>
    </ligand>
</feature>
<feature type="binding site" evidence="1">
    <location>
        <begin position="59"/>
        <end position="63"/>
    </location>
    <ligand>
        <name>GTP</name>
        <dbReference type="ChEBI" id="CHEBI:37565"/>
    </ligand>
</feature>
<feature type="binding site" evidence="1">
    <location>
        <position position="61"/>
    </location>
    <ligand>
        <name>Mg(2+)</name>
        <dbReference type="ChEBI" id="CHEBI:18420"/>
    </ligand>
</feature>
<feature type="binding site" evidence="1">
    <location>
        <begin position="77"/>
        <end position="80"/>
    </location>
    <ligand>
        <name>GTP</name>
        <dbReference type="ChEBI" id="CHEBI:37565"/>
    </ligand>
</feature>
<feature type="binding site" evidence="1">
    <location>
        <begin position="144"/>
        <end position="147"/>
    </location>
    <ligand>
        <name>GTP</name>
        <dbReference type="ChEBI" id="CHEBI:37565"/>
    </ligand>
</feature>
<feature type="binding site" evidence="1">
    <location>
        <begin position="176"/>
        <end position="178"/>
    </location>
    <ligand>
        <name>GTP</name>
        <dbReference type="ChEBI" id="CHEBI:37565"/>
    </ligand>
</feature>
<sequence length="196" mass="22671">MKVNPNNIELIISAVKEDQYPETELSEVALSGRSNVGKSTFINSMIGRKNMARTSQQPGKTQTLNFYNIDEQLIFVDVPGYGYAKVSKTQREKFGKMIEEYITKRENLQLVIQLVDLRHDPTQDDILMYNYLKHFDIPTLVICTKEDKIPKGKVQKHIKNIKTQLDMDPDDTIVSYSSIQNNKQQQIWNLIEPYIS</sequence>
<organism>
    <name type="scientific">Staphylococcus aureus (strain MRSA252)</name>
    <dbReference type="NCBI Taxonomy" id="282458"/>
    <lineage>
        <taxon>Bacteria</taxon>
        <taxon>Bacillati</taxon>
        <taxon>Bacillota</taxon>
        <taxon>Bacilli</taxon>
        <taxon>Bacillales</taxon>
        <taxon>Staphylococcaceae</taxon>
        <taxon>Staphylococcus</taxon>
    </lineage>
</organism>
<evidence type="ECO:0000255" key="1">
    <source>
        <dbReference type="HAMAP-Rule" id="MF_00321"/>
    </source>
</evidence>
<keyword id="KW-0131">Cell cycle</keyword>
<keyword id="KW-0132">Cell division</keyword>
<keyword id="KW-0342">GTP-binding</keyword>
<keyword id="KW-0460">Magnesium</keyword>
<keyword id="KW-0479">Metal-binding</keyword>
<keyword id="KW-0547">Nucleotide-binding</keyword>
<keyword id="KW-0717">Septation</keyword>
<comment type="function">
    <text evidence="1">Necessary for normal cell division and for the maintenance of normal septation.</text>
</comment>
<comment type="cofactor">
    <cofactor evidence="1">
        <name>Mg(2+)</name>
        <dbReference type="ChEBI" id="CHEBI:18420"/>
    </cofactor>
</comment>
<comment type="similarity">
    <text evidence="1">Belongs to the TRAFAC class TrmE-Era-EngA-EngB-Septin-like GTPase superfamily. EngB GTPase family.</text>
</comment>
<name>ENGB_STAAR</name>